<name>SYM_CYTH3</name>
<keyword id="KW-0030">Aminoacyl-tRNA synthetase</keyword>
<keyword id="KW-0067">ATP-binding</keyword>
<keyword id="KW-0963">Cytoplasm</keyword>
<keyword id="KW-0436">Ligase</keyword>
<keyword id="KW-0479">Metal-binding</keyword>
<keyword id="KW-0547">Nucleotide-binding</keyword>
<keyword id="KW-0648">Protein biosynthesis</keyword>
<keyword id="KW-1185">Reference proteome</keyword>
<keyword id="KW-0694">RNA-binding</keyword>
<keyword id="KW-0820">tRNA-binding</keyword>
<keyword id="KW-0862">Zinc</keyword>
<accession>Q11RM3</accession>
<feature type="chain" id="PRO_0000331809" description="Methionine--tRNA ligase">
    <location>
        <begin position="1"/>
        <end position="689"/>
    </location>
</feature>
<feature type="domain" description="tRNA-binding" evidence="1">
    <location>
        <begin position="588"/>
        <end position="689"/>
    </location>
</feature>
<feature type="short sequence motif" description="'HIGH' region">
    <location>
        <begin position="15"/>
        <end position="25"/>
    </location>
</feature>
<feature type="short sequence motif" description="'KMSKS' region">
    <location>
        <begin position="342"/>
        <end position="346"/>
    </location>
</feature>
<feature type="binding site" evidence="1">
    <location>
        <position position="147"/>
    </location>
    <ligand>
        <name>Zn(2+)</name>
        <dbReference type="ChEBI" id="CHEBI:29105"/>
    </ligand>
</feature>
<feature type="binding site" evidence="1">
    <location>
        <position position="150"/>
    </location>
    <ligand>
        <name>Zn(2+)</name>
        <dbReference type="ChEBI" id="CHEBI:29105"/>
    </ligand>
</feature>
<feature type="binding site" evidence="1">
    <location>
        <position position="160"/>
    </location>
    <ligand>
        <name>Zn(2+)</name>
        <dbReference type="ChEBI" id="CHEBI:29105"/>
    </ligand>
</feature>
<feature type="binding site" evidence="1">
    <location>
        <position position="163"/>
    </location>
    <ligand>
        <name>Zn(2+)</name>
        <dbReference type="ChEBI" id="CHEBI:29105"/>
    </ligand>
</feature>
<feature type="binding site" evidence="1">
    <location>
        <position position="345"/>
    </location>
    <ligand>
        <name>ATP</name>
        <dbReference type="ChEBI" id="CHEBI:30616"/>
    </ligand>
</feature>
<protein>
    <recommendedName>
        <fullName evidence="1">Methionine--tRNA ligase</fullName>
        <ecNumber evidence="1">6.1.1.10</ecNumber>
    </recommendedName>
    <alternativeName>
        <fullName evidence="1">Methionyl-tRNA synthetase</fullName>
        <shortName evidence="1">MetRS</shortName>
    </alternativeName>
</protein>
<comment type="function">
    <text evidence="1">Is required not only for elongation of protein synthesis but also for the initiation of all mRNA translation through initiator tRNA(fMet) aminoacylation.</text>
</comment>
<comment type="catalytic activity">
    <reaction evidence="1">
        <text>tRNA(Met) + L-methionine + ATP = L-methionyl-tRNA(Met) + AMP + diphosphate</text>
        <dbReference type="Rhea" id="RHEA:13481"/>
        <dbReference type="Rhea" id="RHEA-COMP:9667"/>
        <dbReference type="Rhea" id="RHEA-COMP:9698"/>
        <dbReference type="ChEBI" id="CHEBI:30616"/>
        <dbReference type="ChEBI" id="CHEBI:33019"/>
        <dbReference type="ChEBI" id="CHEBI:57844"/>
        <dbReference type="ChEBI" id="CHEBI:78442"/>
        <dbReference type="ChEBI" id="CHEBI:78530"/>
        <dbReference type="ChEBI" id="CHEBI:456215"/>
        <dbReference type="EC" id="6.1.1.10"/>
    </reaction>
</comment>
<comment type="cofactor">
    <cofactor evidence="1">
        <name>Zn(2+)</name>
        <dbReference type="ChEBI" id="CHEBI:29105"/>
    </cofactor>
    <text evidence="1">Binds 1 zinc ion per subunit.</text>
</comment>
<comment type="subunit">
    <text evidence="1">Homodimer.</text>
</comment>
<comment type="subcellular location">
    <subcellularLocation>
        <location evidence="1">Cytoplasm</location>
    </subcellularLocation>
</comment>
<comment type="similarity">
    <text evidence="1">Belongs to the class-I aminoacyl-tRNA synthetase family. MetG type 1 subfamily.</text>
</comment>
<organism>
    <name type="scientific">Cytophaga hutchinsonii (strain ATCC 33406 / DSM 1761 / CIP 103989 / NBRC 15051 / NCIMB 9469 / D465)</name>
    <dbReference type="NCBI Taxonomy" id="269798"/>
    <lineage>
        <taxon>Bacteria</taxon>
        <taxon>Pseudomonadati</taxon>
        <taxon>Bacteroidota</taxon>
        <taxon>Cytophagia</taxon>
        <taxon>Cytophagales</taxon>
        <taxon>Cytophagaceae</taxon>
        <taxon>Cytophaga</taxon>
    </lineage>
</organism>
<proteinExistence type="inferred from homology"/>
<dbReference type="EC" id="6.1.1.10" evidence="1"/>
<dbReference type="EMBL" id="CP000383">
    <property type="protein sequence ID" value="ABG59941.1"/>
    <property type="molecule type" value="Genomic_DNA"/>
</dbReference>
<dbReference type="RefSeq" id="WP_011586051.1">
    <property type="nucleotide sequence ID" value="NC_008255.1"/>
</dbReference>
<dbReference type="SMR" id="Q11RM3"/>
<dbReference type="STRING" id="269798.CHU_2689"/>
<dbReference type="KEGG" id="chu:CHU_2689"/>
<dbReference type="eggNOG" id="COG0073">
    <property type="taxonomic scope" value="Bacteria"/>
</dbReference>
<dbReference type="eggNOG" id="COG0143">
    <property type="taxonomic scope" value="Bacteria"/>
</dbReference>
<dbReference type="HOGENOM" id="CLU_009710_1_2_10"/>
<dbReference type="OrthoDB" id="9810191at2"/>
<dbReference type="Proteomes" id="UP000001822">
    <property type="component" value="Chromosome"/>
</dbReference>
<dbReference type="GO" id="GO:0005829">
    <property type="term" value="C:cytosol"/>
    <property type="evidence" value="ECO:0007669"/>
    <property type="project" value="TreeGrafter"/>
</dbReference>
<dbReference type="GO" id="GO:0005524">
    <property type="term" value="F:ATP binding"/>
    <property type="evidence" value="ECO:0007669"/>
    <property type="project" value="UniProtKB-UniRule"/>
</dbReference>
<dbReference type="GO" id="GO:0046872">
    <property type="term" value="F:metal ion binding"/>
    <property type="evidence" value="ECO:0007669"/>
    <property type="project" value="UniProtKB-KW"/>
</dbReference>
<dbReference type="GO" id="GO:0004825">
    <property type="term" value="F:methionine-tRNA ligase activity"/>
    <property type="evidence" value="ECO:0007669"/>
    <property type="project" value="UniProtKB-UniRule"/>
</dbReference>
<dbReference type="GO" id="GO:0000049">
    <property type="term" value="F:tRNA binding"/>
    <property type="evidence" value="ECO:0007669"/>
    <property type="project" value="UniProtKB-KW"/>
</dbReference>
<dbReference type="GO" id="GO:0006431">
    <property type="term" value="P:methionyl-tRNA aminoacylation"/>
    <property type="evidence" value="ECO:0007669"/>
    <property type="project" value="UniProtKB-UniRule"/>
</dbReference>
<dbReference type="CDD" id="cd07957">
    <property type="entry name" value="Anticodon_Ia_Met"/>
    <property type="match status" value="1"/>
</dbReference>
<dbReference type="CDD" id="cd00814">
    <property type="entry name" value="MetRS_core"/>
    <property type="match status" value="1"/>
</dbReference>
<dbReference type="FunFam" id="2.20.28.20:FF:000001">
    <property type="entry name" value="Methionine--tRNA ligase"/>
    <property type="match status" value="1"/>
</dbReference>
<dbReference type="FunFam" id="2.40.50.140:FF:000042">
    <property type="entry name" value="Methionine--tRNA ligase"/>
    <property type="match status" value="1"/>
</dbReference>
<dbReference type="Gene3D" id="3.40.50.620">
    <property type="entry name" value="HUPs"/>
    <property type="match status" value="1"/>
</dbReference>
<dbReference type="Gene3D" id="1.10.730.10">
    <property type="entry name" value="Isoleucyl-tRNA Synthetase, Domain 1"/>
    <property type="match status" value="1"/>
</dbReference>
<dbReference type="Gene3D" id="2.20.28.20">
    <property type="entry name" value="Methionyl-tRNA synthetase, Zn-domain"/>
    <property type="match status" value="1"/>
</dbReference>
<dbReference type="Gene3D" id="2.40.50.140">
    <property type="entry name" value="Nucleic acid-binding proteins"/>
    <property type="match status" value="1"/>
</dbReference>
<dbReference type="HAMAP" id="MF_00098">
    <property type="entry name" value="Met_tRNA_synth_type1"/>
    <property type="match status" value="1"/>
</dbReference>
<dbReference type="InterPro" id="IPR001412">
    <property type="entry name" value="aa-tRNA-synth_I_CS"/>
</dbReference>
<dbReference type="InterPro" id="IPR041872">
    <property type="entry name" value="Anticodon_Met"/>
</dbReference>
<dbReference type="InterPro" id="IPR023458">
    <property type="entry name" value="Met-tRNA_ligase_1"/>
</dbReference>
<dbReference type="InterPro" id="IPR014758">
    <property type="entry name" value="Met-tRNA_synth"/>
</dbReference>
<dbReference type="InterPro" id="IPR015413">
    <property type="entry name" value="Methionyl/Leucyl_tRNA_Synth"/>
</dbReference>
<dbReference type="InterPro" id="IPR033911">
    <property type="entry name" value="MetRS_core"/>
</dbReference>
<dbReference type="InterPro" id="IPR029038">
    <property type="entry name" value="MetRS_Zn"/>
</dbReference>
<dbReference type="InterPro" id="IPR012340">
    <property type="entry name" value="NA-bd_OB-fold"/>
</dbReference>
<dbReference type="InterPro" id="IPR014729">
    <property type="entry name" value="Rossmann-like_a/b/a_fold"/>
</dbReference>
<dbReference type="InterPro" id="IPR002547">
    <property type="entry name" value="tRNA-bd_dom"/>
</dbReference>
<dbReference type="InterPro" id="IPR009080">
    <property type="entry name" value="tRNAsynth_Ia_anticodon-bd"/>
</dbReference>
<dbReference type="NCBIfam" id="TIGR00398">
    <property type="entry name" value="metG"/>
    <property type="match status" value="1"/>
</dbReference>
<dbReference type="NCBIfam" id="NF001100">
    <property type="entry name" value="PRK00133.1"/>
    <property type="match status" value="1"/>
</dbReference>
<dbReference type="PANTHER" id="PTHR45765">
    <property type="entry name" value="METHIONINE--TRNA LIGASE"/>
    <property type="match status" value="1"/>
</dbReference>
<dbReference type="PANTHER" id="PTHR45765:SF1">
    <property type="entry name" value="METHIONINE--TRNA LIGASE, CYTOPLASMIC"/>
    <property type="match status" value="1"/>
</dbReference>
<dbReference type="Pfam" id="PF19303">
    <property type="entry name" value="Anticodon_3"/>
    <property type="match status" value="1"/>
</dbReference>
<dbReference type="Pfam" id="PF09334">
    <property type="entry name" value="tRNA-synt_1g"/>
    <property type="match status" value="1"/>
</dbReference>
<dbReference type="Pfam" id="PF01588">
    <property type="entry name" value="tRNA_bind"/>
    <property type="match status" value="1"/>
</dbReference>
<dbReference type="PRINTS" id="PR01041">
    <property type="entry name" value="TRNASYNTHMET"/>
</dbReference>
<dbReference type="SUPFAM" id="SSF47323">
    <property type="entry name" value="Anticodon-binding domain of a subclass of class I aminoacyl-tRNA synthetases"/>
    <property type="match status" value="1"/>
</dbReference>
<dbReference type="SUPFAM" id="SSF57770">
    <property type="entry name" value="Methionyl-tRNA synthetase (MetRS), Zn-domain"/>
    <property type="match status" value="1"/>
</dbReference>
<dbReference type="SUPFAM" id="SSF50249">
    <property type="entry name" value="Nucleic acid-binding proteins"/>
    <property type="match status" value="1"/>
</dbReference>
<dbReference type="SUPFAM" id="SSF52374">
    <property type="entry name" value="Nucleotidylyl transferase"/>
    <property type="match status" value="1"/>
</dbReference>
<dbReference type="PROSITE" id="PS00178">
    <property type="entry name" value="AA_TRNA_LIGASE_I"/>
    <property type="match status" value="1"/>
</dbReference>
<dbReference type="PROSITE" id="PS50886">
    <property type="entry name" value="TRBD"/>
    <property type="match status" value="1"/>
</dbReference>
<reference key="1">
    <citation type="journal article" date="2007" name="Appl. Environ. Microbiol.">
        <title>Genome sequence of the cellulolytic gliding bacterium Cytophaga hutchinsonii.</title>
        <authorList>
            <person name="Xie G."/>
            <person name="Bruce D.C."/>
            <person name="Challacombe J.F."/>
            <person name="Chertkov O."/>
            <person name="Detter J.C."/>
            <person name="Gilna P."/>
            <person name="Han C.S."/>
            <person name="Lucas S."/>
            <person name="Misra M."/>
            <person name="Myers G.L."/>
            <person name="Richardson P."/>
            <person name="Tapia R."/>
            <person name="Thayer N."/>
            <person name="Thompson L.S."/>
            <person name="Brettin T.S."/>
            <person name="Henrissat B."/>
            <person name="Wilson D.B."/>
            <person name="McBride M.J."/>
        </authorList>
    </citation>
    <scope>NUCLEOTIDE SEQUENCE [LARGE SCALE GENOMIC DNA]</scope>
    <source>
        <strain>ATCC 33406 / DSM 1761 / JCM 20678 / CIP 103989 / IAM 12607 / NBRC 15051 / NCIMB 9469 / D465</strain>
    </source>
</reference>
<sequence length="689" mass="77526">MTNKPSRYTITSALPYANGPVHIGHLAGVYVPADIYARFLRSKGENVLFIGGSDEHGVPITIRAKKEGVTPQQVVDKYHVQIKQSFEELGISFDIYSRTSSKIHAETSSEYFKKLYEDGKFIEQTSEQYYDPKAEQFLADRYIIGTCPKCGNENAYGDQCEKCGSTLSPSELINPRSTLSGEKPVMKSTKHWFLPLDQYEPWLKQWILEDHKNWKTNVYGQCKSWLDQGLQPRAVTRDLDWGVPVPVAGAEGKVLYVWFDAPIGYISAAKDYFKNSEIKAVHKNNTWEDFWKKDDTKLVHFIGKDNIVFHCIIFPAMLKAEGSYILPDNVPANEFMNLEGDKISTSRNWAVWLHEYLEEFKGKQDVLRYALCANAPETKDNDFTWRDFQARNNNELVAIYGNFVNRALVLTHKYYDSVIPALGKLEASDEGVIMMLKEFPAKIAASIEQYRFREALGFMMDLARLGNKYLADTEPWKIYKENPERVKTILHIGLQIAANLAIVSEPFIPFTSAKLFTMLNLKANTWNNAGTIDLLKAGDQLGTAELLFDKIEDATIEAQVKKLEDTKQANLLANAEVKPLKENVSFDDFAKMDIRVATIIAAEKVAKTKKLLKLTLKTGIDERTVVSGIAEHFEPEAIIGQQVSLLANLAPREIKGIVSQGMILMAEDADGSLKFVQPAAVVNAGSMIG</sequence>
<gene>
    <name evidence="1" type="primary">metG</name>
    <name type="ordered locus">CHU_2689</name>
</gene>
<evidence type="ECO:0000255" key="1">
    <source>
        <dbReference type="HAMAP-Rule" id="MF_00098"/>
    </source>
</evidence>